<reference key="1">
    <citation type="journal article" date="2011" name="J. Bacteriol.">
        <title>Comparative genomics of 28 Salmonella enterica isolates: evidence for CRISPR-mediated adaptive sublineage evolution.</title>
        <authorList>
            <person name="Fricke W.F."/>
            <person name="Mammel M.K."/>
            <person name="McDermott P.F."/>
            <person name="Tartera C."/>
            <person name="White D.G."/>
            <person name="Leclerc J.E."/>
            <person name="Ravel J."/>
            <person name="Cebula T.A."/>
        </authorList>
    </citation>
    <scope>NUCLEOTIDE SEQUENCE [LARGE SCALE GENOMIC DNA]</scope>
    <source>
        <strain>SL483</strain>
    </source>
</reference>
<comment type="function">
    <text evidence="1">Involved in iron-sulfur cluster biogenesis. Binds a 4Fe-4S cluster, can transfer this cluster to apoproteins, and thereby intervenes in the maturation of Fe/S proteins. Could also act as a scaffold/chaperone for damaged Fe/S proteins.</text>
</comment>
<comment type="cofactor">
    <cofactor evidence="1">
        <name>[4Fe-4S] cluster</name>
        <dbReference type="ChEBI" id="CHEBI:49883"/>
    </cofactor>
    <text evidence="1">Binds 1 [4Fe-4S] cluster per subunit. The cluster is presumably bound at the interface of two monomers.</text>
</comment>
<comment type="subunit">
    <text evidence="1">Homodimer.</text>
</comment>
<comment type="similarity">
    <text evidence="1">Belongs to the NfuA family.</text>
</comment>
<protein>
    <recommendedName>
        <fullName evidence="1">Fe/S biogenesis protein NfuA</fullName>
    </recommendedName>
</protein>
<proteinExistence type="inferred from homology"/>
<dbReference type="EMBL" id="CP001138">
    <property type="protein sequence ID" value="ACH49066.1"/>
    <property type="molecule type" value="Genomic_DNA"/>
</dbReference>
<dbReference type="RefSeq" id="WP_000619387.1">
    <property type="nucleotide sequence ID" value="NC_011149.1"/>
</dbReference>
<dbReference type="SMR" id="B5F8M8"/>
<dbReference type="GeneID" id="66757844"/>
<dbReference type="KEGG" id="sea:SeAg_B3713"/>
<dbReference type="HOGENOM" id="CLU_094569_0_0_6"/>
<dbReference type="Proteomes" id="UP000008819">
    <property type="component" value="Chromosome"/>
</dbReference>
<dbReference type="GO" id="GO:0051539">
    <property type="term" value="F:4 iron, 4 sulfur cluster binding"/>
    <property type="evidence" value="ECO:0007669"/>
    <property type="project" value="UniProtKB-UniRule"/>
</dbReference>
<dbReference type="GO" id="GO:0005506">
    <property type="term" value="F:iron ion binding"/>
    <property type="evidence" value="ECO:0007669"/>
    <property type="project" value="InterPro"/>
</dbReference>
<dbReference type="GO" id="GO:0016226">
    <property type="term" value="P:iron-sulfur cluster assembly"/>
    <property type="evidence" value="ECO:0007669"/>
    <property type="project" value="UniProtKB-UniRule"/>
</dbReference>
<dbReference type="GO" id="GO:0051604">
    <property type="term" value="P:protein maturation"/>
    <property type="evidence" value="ECO:0007669"/>
    <property type="project" value="UniProtKB-UniRule"/>
</dbReference>
<dbReference type="FunFam" id="2.60.300.12:FF:000004">
    <property type="entry name" value="Fe/S biogenesis protein NfuA"/>
    <property type="match status" value="1"/>
</dbReference>
<dbReference type="FunFam" id="3.30.300.130:FF:000002">
    <property type="entry name" value="Fe/S biogenesis protein NfuA"/>
    <property type="match status" value="1"/>
</dbReference>
<dbReference type="Gene3D" id="3.30.300.130">
    <property type="entry name" value="Fe-S cluster assembly (FSCA)"/>
    <property type="match status" value="1"/>
</dbReference>
<dbReference type="Gene3D" id="2.60.300.12">
    <property type="entry name" value="HesB-like domain"/>
    <property type="match status" value="1"/>
</dbReference>
<dbReference type="HAMAP" id="MF_01637">
    <property type="entry name" value="Fe_S_biogen_NfuA"/>
    <property type="match status" value="1"/>
</dbReference>
<dbReference type="InterPro" id="IPR017726">
    <property type="entry name" value="Fe/S_biogenesis_protein_NfuA"/>
</dbReference>
<dbReference type="InterPro" id="IPR000361">
    <property type="entry name" value="FeS_biogenesis"/>
</dbReference>
<dbReference type="InterPro" id="IPR034904">
    <property type="entry name" value="FSCA_dom_sf"/>
</dbReference>
<dbReference type="InterPro" id="IPR035903">
    <property type="entry name" value="HesB-like_dom_sf"/>
</dbReference>
<dbReference type="InterPro" id="IPR001075">
    <property type="entry name" value="NIF_FeS_clus_asmbl_NifU_C"/>
</dbReference>
<dbReference type="NCBIfam" id="NF008392">
    <property type="entry name" value="PRK11190.1"/>
    <property type="match status" value="1"/>
</dbReference>
<dbReference type="NCBIfam" id="TIGR03341">
    <property type="entry name" value="YhgI_GntY"/>
    <property type="match status" value="1"/>
</dbReference>
<dbReference type="PANTHER" id="PTHR11178:SF51">
    <property type="entry name" value="FE_S BIOGENESIS PROTEIN NFUA"/>
    <property type="match status" value="1"/>
</dbReference>
<dbReference type="PANTHER" id="PTHR11178">
    <property type="entry name" value="IRON-SULFUR CLUSTER SCAFFOLD PROTEIN NFU-RELATED"/>
    <property type="match status" value="1"/>
</dbReference>
<dbReference type="Pfam" id="PF01521">
    <property type="entry name" value="Fe-S_biosyn"/>
    <property type="match status" value="1"/>
</dbReference>
<dbReference type="Pfam" id="PF01106">
    <property type="entry name" value="NifU"/>
    <property type="match status" value="1"/>
</dbReference>
<dbReference type="SUPFAM" id="SSF117916">
    <property type="entry name" value="Fe-S cluster assembly (FSCA) domain-like"/>
    <property type="match status" value="1"/>
</dbReference>
<dbReference type="SUPFAM" id="SSF89360">
    <property type="entry name" value="HesB-like domain"/>
    <property type="match status" value="1"/>
</dbReference>
<accession>B5F8M8</accession>
<organism>
    <name type="scientific">Salmonella agona (strain SL483)</name>
    <dbReference type="NCBI Taxonomy" id="454166"/>
    <lineage>
        <taxon>Bacteria</taxon>
        <taxon>Pseudomonadati</taxon>
        <taxon>Pseudomonadota</taxon>
        <taxon>Gammaproteobacteria</taxon>
        <taxon>Enterobacterales</taxon>
        <taxon>Enterobacteriaceae</taxon>
        <taxon>Salmonella</taxon>
    </lineage>
</organism>
<gene>
    <name evidence="1" type="primary">nfuA</name>
    <name type="ordered locus">SeAg_B3713</name>
</gene>
<evidence type="ECO:0000255" key="1">
    <source>
        <dbReference type="HAMAP-Rule" id="MF_01637"/>
    </source>
</evidence>
<sequence>MIRISDAAQAHFAKLLANQEEGTQIRVFVINPGTPNAECGVSYCPPDAVEATDTALKFDLLTAYVDELSAPYLEDAEIDFVTDQLGSQLTLKAPNAKMRKVADDAPLMERVEYALQSQINPQLAGHGGRVSLMEITDEGYAILQFGGGCNGCSMVDVTLKEGIEKQLLNEFPELKGVRDLTEHQRGEHSYY</sequence>
<name>NFUA_SALA4</name>
<feature type="chain" id="PRO_1000186770" description="Fe/S biogenesis protein NfuA">
    <location>
        <begin position="1"/>
        <end position="191"/>
    </location>
</feature>
<feature type="binding site" evidence="1">
    <location>
        <position position="149"/>
    </location>
    <ligand>
        <name>[4Fe-4S] cluster</name>
        <dbReference type="ChEBI" id="CHEBI:49883"/>
    </ligand>
</feature>
<feature type="binding site" evidence="1">
    <location>
        <position position="152"/>
    </location>
    <ligand>
        <name>[4Fe-4S] cluster</name>
        <dbReference type="ChEBI" id="CHEBI:49883"/>
    </ligand>
</feature>
<keyword id="KW-0004">4Fe-4S</keyword>
<keyword id="KW-0408">Iron</keyword>
<keyword id="KW-0411">Iron-sulfur</keyword>
<keyword id="KW-0479">Metal-binding</keyword>